<accession>A2SSW2</accession>
<comment type="function">
    <text evidence="1">eIF-2 functions in the early steps of protein synthesis by forming a ternary complex with GTP and initiator tRNA.</text>
</comment>
<comment type="subunit">
    <text evidence="1">Heterotrimer composed of an alpha, a beta and a gamma chain.</text>
</comment>
<comment type="similarity">
    <text evidence="1">Belongs to the eIF-2-beta/eIF-5 family.</text>
</comment>
<proteinExistence type="inferred from homology"/>
<protein>
    <recommendedName>
        <fullName evidence="1">Translation initiation factor 2 subunit beta</fullName>
    </recommendedName>
    <alternativeName>
        <fullName evidence="1">aIF2-beta</fullName>
    </alternativeName>
    <alternativeName>
        <fullName evidence="1">eIF-2-beta</fullName>
    </alternativeName>
</protein>
<evidence type="ECO:0000255" key="1">
    <source>
        <dbReference type="HAMAP-Rule" id="MF_00232"/>
    </source>
</evidence>
<reference key="1">
    <citation type="journal article" date="2009" name="Stand. Genomic Sci.">
        <title>Complete genome sequence of Methanocorpusculum labreanum type strain Z.</title>
        <authorList>
            <person name="Anderson I.J."/>
            <person name="Sieprawska-Lupa M."/>
            <person name="Goltsman E."/>
            <person name="Lapidus A."/>
            <person name="Copeland A."/>
            <person name="Glavina Del Rio T."/>
            <person name="Tice H."/>
            <person name="Dalin E."/>
            <person name="Barry K."/>
            <person name="Pitluck S."/>
            <person name="Hauser L."/>
            <person name="Land M."/>
            <person name="Lucas S."/>
            <person name="Richardson P."/>
            <person name="Whitman W.B."/>
            <person name="Kyrpides N.C."/>
        </authorList>
    </citation>
    <scope>NUCLEOTIDE SEQUENCE [LARGE SCALE GENOMIC DNA]</scope>
    <source>
        <strain>ATCC 43576 / DSM 4855 / Z</strain>
    </source>
</reference>
<sequence>MVQSYEDMLKAAYSGIGEPTETGERFVMPKAKIYIEGKTTVLENFSDIVDSLNRDKDHFMKFILGELGTAGKIDGNRAVFNGKFEQAQFDAILETYVGDYVICSECGRPDTKLVKDDRVLMLLCEACGSKRPIRKRKAKTEVQGPAIEEGKELEVHIESISKKGDGVARIGKYILYVAGTKAGQNVKVRITRISGQVAFTQKIL</sequence>
<name>IF2B_METLZ</name>
<gene>
    <name evidence="1" type="primary">eif2b</name>
    <name type="ordered locus">Mlab_1249</name>
</gene>
<dbReference type="EMBL" id="CP000559">
    <property type="protein sequence ID" value="ABN07418.1"/>
    <property type="molecule type" value="Genomic_DNA"/>
</dbReference>
<dbReference type="RefSeq" id="WP_011833621.1">
    <property type="nucleotide sequence ID" value="NC_008942.1"/>
</dbReference>
<dbReference type="SMR" id="A2SSW2"/>
<dbReference type="STRING" id="410358.Mlab_1249"/>
<dbReference type="GeneID" id="4794955"/>
<dbReference type="KEGG" id="mla:Mlab_1249"/>
<dbReference type="eggNOG" id="arCOG01640">
    <property type="taxonomic scope" value="Archaea"/>
</dbReference>
<dbReference type="HOGENOM" id="CLU_026663_3_0_2"/>
<dbReference type="OrthoDB" id="38099at2157"/>
<dbReference type="Proteomes" id="UP000000365">
    <property type="component" value="Chromosome"/>
</dbReference>
<dbReference type="GO" id="GO:0003743">
    <property type="term" value="F:translation initiation factor activity"/>
    <property type="evidence" value="ECO:0007669"/>
    <property type="project" value="UniProtKB-UniRule"/>
</dbReference>
<dbReference type="FunFam" id="3.30.30.170:FF:000001">
    <property type="entry name" value="Eukaryotic translation initiation factor 2 subunit"/>
    <property type="match status" value="1"/>
</dbReference>
<dbReference type="Gene3D" id="3.30.30.170">
    <property type="match status" value="1"/>
</dbReference>
<dbReference type="Gene3D" id="2.40.50.140">
    <property type="entry name" value="Nucleic acid-binding proteins"/>
    <property type="match status" value="1"/>
</dbReference>
<dbReference type="HAMAP" id="MF_00232">
    <property type="entry name" value="eIF_2_beta"/>
    <property type="match status" value="1"/>
</dbReference>
<dbReference type="InterPro" id="IPR045196">
    <property type="entry name" value="IF2/IF5"/>
</dbReference>
<dbReference type="InterPro" id="IPR012340">
    <property type="entry name" value="NA-bd_OB-fold"/>
</dbReference>
<dbReference type="InterPro" id="IPR004458">
    <property type="entry name" value="TIF2_bsu_arc"/>
</dbReference>
<dbReference type="InterPro" id="IPR002792">
    <property type="entry name" value="TRAM_dom"/>
</dbReference>
<dbReference type="InterPro" id="IPR002735">
    <property type="entry name" value="Transl_init_fac_IF2/IF5_dom"/>
</dbReference>
<dbReference type="InterPro" id="IPR016189">
    <property type="entry name" value="Transl_init_fac_IF2/IF5_N"/>
</dbReference>
<dbReference type="InterPro" id="IPR016190">
    <property type="entry name" value="Transl_init_fac_IF2/IF5_Zn-bd"/>
</dbReference>
<dbReference type="NCBIfam" id="TIGR00311">
    <property type="entry name" value="aIF-2beta"/>
    <property type="match status" value="1"/>
</dbReference>
<dbReference type="NCBIfam" id="NF003067">
    <property type="entry name" value="PRK03988.1"/>
    <property type="match status" value="1"/>
</dbReference>
<dbReference type="NCBIfam" id="NF008993">
    <property type="entry name" value="PRK12336.1"/>
    <property type="match status" value="1"/>
</dbReference>
<dbReference type="PANTHER" id="PTHR23001">
    <property type="entry name" value="EUKARYOTIC TRANSLATION INITIATION FACTOR"/>
    <property type="match status" value="1"/>
</dbReference>
<dbReference type="PANTHER" id="PTHR23001:SF3">
    <property type="entry name" value="EUKARYOTIC TRANSLATION INITIATION FACTOR 2 SUBUNIT 2"/>
    <property type="match status" value="1"/>
</dbReference>
<dbReference type="Pfam" id="PF01873">
    <property type="entry name" value="eIF-5_eIF-2B"/>
    <property type="match status" value="1"/>
</dbReference>
<dbReference type="Pfam" id="PF01938">
    <property type="entry name" value="TRAM"/>
    <property type="match status" value="1"/>
</dbReference>
<dbReference type="SMART" id="SM00653">
    <property type="entry name" value="eIF2B_5"/>
    <property type="match status" value="1"/>
</dbReference>
<dbReference type="SUPFAM" id="SSF50249">
    <property type="entry name" value="Nucleic acid-binding proteins"/>
    <property type="match status" value="1"/>
</dbReference>
<dbReference type="SUPFAM" id="SSF100966">
    <property type="entry name" value="Translation initiation factor 2 beta, aIF2beta, N-terminal domain"/>
    <property type="match status" value="1"/>
</dbReference>
<dbReference type="SUPFAM" id="SSF75689">
    <property type="entry name" value="Zinc-binding domain of translation initiation factor 2 beta"/>
    <property type="match status" value="1"/>
</dbReference>
<dbReference type="PROSITE" id="PS50926">
    <property type="entry name" value="TRAM"/>
    <property type="match status" value="1"/>
</dbReference>
<keyword id="KW-0396">Initiation factor</keyword>
<keyword id="KW-0648">Protein biosynthesis</keyword>
<keyword id="KW-1185">Reference proteome</keyword>
<feature type="chain" id="PRO_1000021649" description="Translation initiation factor 2 subunit beta">
    <location>
        <begin position="1"/>
        <end position="204"/>
    </location>
</feature>
<feature type="domain" description="TRAM" evidence="1">
    <location>
        <begin position="146"/>
        <end position="204"/>
    </location>
</feature>
<organism>
    <name type="scientific">Methanocorpusculum labreanum (strain ATCC 43576 / DSM 4855 / Z)</name>
    <dbReference type="NCBI Taxonomy" id="410358"/>
    <lineage>
        <taxon>Archaea</taxon>
        <taxon>Methanobacteriati</taxon>
        <taxon>Methanobacteriota</taxon>
        <taxon>Stenosarchaea group</taxon>
        <taxon>Methanomicrobia</taxon>
        <taxon>Methanomicrobiales</taxon>
        <taxon>Methanocorpusculaceae</taxon>
        <taxon>Methanocorpusculum</taxon>
    </lineage>
</organism>